<reference key="1">
    <citation type="journal article" date="2002" name="Proc. Natl. Acad. Sci. U.S.A.">
        <title>Circadian genes in a blind subterranean mammal II: conservation and uniqueness of the three Period homologs in the blind subterranean mole rat, Spalax ehrenbergi superspecies.</title>
        <authorList>
            <person name="Avivi A."/>
            <person name="Oster H."/>
            <person name="Joel A."/>
            <person name="Albrecht U."/>
            <person name="Nevo E."/>
        </authorList>
    </citation>
    <scope>NUCLEOTIDE SEQUENCE [MRNA]</scope>
    <scope>TISSUE SPECIFICITY</scope>
    <scope>INDUCTION</scope>
    <source>
        <tissue>Brain</tissue>
    </source>
</reference>
<name>PER2_SPAJD</name>
<gene>
    <name type="primary">PER2</name>
</gene>
<sequence>MNGYVEFSPSPTKESVEPQPSQAVLQEDVDMSSGSSGHENCSMGRDSQGSDCDDNGKELRMLVEPSDTHSSPDAFRLMMTEPQHNPSTSGCSSEQSAKANAHKELIRTLRELKVHLPADKKAKGKASTLAILKYALRSVKQVKANEEYYQLLMSSESQPCSMDVPSYTVEQVEGITSEYIVKNADMFAVAVSLVSGKILYISNQVASIFHCKKDAFSDAKFVEFLAPHDVSVFHSYTTPYKLPPWSMCCGVDSFTQECMEEKSFFCRVSVGKHHESEIRYQPFRMTPYLVKVQEQQGAESQLCCLLLAERIHSGYEAPRIPPEKRIFTTTHIPNCLFQDVDERAVPLLGYLPQDLIETPVLVQLHPSDRPLMLAIHKKILQAGGQPFDYSPIRFRARNGEYITLDTSWSSFINPWSRKISFIIGRHKVRVGPLNEDVFAASPCPEGKTPHPSIQELTEQIHRLLMQPVPHSGSSGYGSLGSNGSHEHLMSQTSSSDSNGHEESRWRKSGISKNGSKTQTRSHFSHESGEQKEIAVTEMQSSTPAQAKAAPTVERDSSGSSLPKASFPEELAYKNQPACSYQQISCLDSVIRYLESCNEAATLKRKCEFPANIPSRKATVSPGLHAEEAAPPPSKVSSHAEVRARLSSLTLPDKAESVVSLTSQCSYSSTIVHVGDKKPQPELETVEDAVSGPESLDGAPGGLSQEKGPLQKLGLTKEVLAAHTQREEQGFLQRFREVSRLGALQAHRQNYRAQASERAAPGLRNASGMDSSWKKTGKNRKLKSKRVKTRDSSESTGSGGPVSHRPPLVGLNATAWSPSDTSQSSCPSAPFPAPVPAYPLPVFEAPGITSTPAPPEAAHSSFTVPVVPMGAQPDFAVQPLPLAAPLAPVLAFMLPSYPFPPANPNLSHAFFPGQPHFPAQPTFASEMTPASQADFPSQTPLLRQQCTCPVTPPAATVTSGRASPPLFQSRGSSPLQLNLLQLEEAPEGSTGAAGTSGTTGTAAAGLDCTPGTSRDRQPKAPSTCKEPSDTQNSDALSTSSDLLNLLLAEDLCSATGSALSGSGASATSDSLGSGSLGCDASRSGAGSSDTSHTSKYFGSIDSSENNHKAKVSTDTEESEQFIKYVLQDPIWLLVANTDDSVMMTYQLPSRDLESVLREGRERLKLLQRAQPRFTEGQRRELREVHPWVQTGGLPAAIDVAECVYCKSERKGDICLPYEEDSPSPGLCDTSEAKEEEGEQLTGPRIEAQT</sequence>
<protein>
    <recommendedName>
        <fullName>Period circadian protein homolog 2</fullName>
        <shortName>sPER2</shortName>
    </recommendedName>
    <alternativeName>
        <fullName>Circadian clock protein PERIOD 2</fullName>
    </alternativeName>
</protein>
<accession>Q8K3T2</accession>
<organism>
    <name type="scientific">Spalax judaei</name>
    <name type="common">Judean Mountains blind mole rat</name>
    <name type="synonym">Nannospalax judaei</name>
    <dbReference type="NCBI Taxonomy" id="134510"/>
    <lineage>
        <taxon>Eukaryota</taxon>
        <taxon>Metazoa</taxon>
        <taxon>Chordata</taxon>
        <taxon>Craniata</taxon>
        <taxon>Vertebrata</taxon>
        <taxon>Euteleostomi</taxon>
        <taxon>Mammalia</taxon>
        <taxon>Eutheria</taxon>
        <taxon>Euarchontoglires</taxon>
        <taxon>Glires</taxon>
        <taxon>Rodentia</taxon>
        <taxon>Myomorpha</taxon>
        <taxon>Muroidea</taxon>
        <taxon>Spalacidae</taxon>
        <taxon>Spalacinae</taxon>
        <taxon>Nannospalax</taxon>
    </lineage>
</organism>
<evidence type="ECO:0000250" key="1">
    <source>
        <dbReference type="UniProtKB" id="O15055"/>
    </source>
</evidence>
<evidence type="ECO:0000250" key="2">
    <source>
        <dbReference type="UniProtKB" id="O54943"/>
    </source>
</evidence>
<evidence type="ECO:0000250" key="3">
    <source>
        <dbReference type="UniProtKB" id="Q9Z301"/>
    </source>
</evidence>
<evidence type="ECO:0000255" key="4">
    <source>
        <dbReference type="PROSITE-ProRule" id="PRU00140"/>
    </source>
</evidence>
<evidence type="ECO:0000256" key="5">
    <source>
        <dbReference type="SAM" id="MobiDB-lite"/>
    </source>
</evidence>
<evidence type="ECO:0000269" key="6">
    <source>
    </source>
</evidence>
<dbReference type="EMBL" id="AJ345060">
    <property type="protein sequence ID" value="CAC95107.1"/>
    <property type="molecule type" value="mRNA"/>
</dbReference>
<dbReference type="SMR" id="Q8K3T2"/>
<dbReference type="GO" id="GO:0005737">
    <property type="term" value="C:cytoplasm"/>
    <property type="evidence" value="ECO:0000250"/>
    <property type="project" value="UniProtKB"/>
</dbReference>
<dbReference type="GO" id="GO:0005634">
    <property type="term" value="C:nucleus"/>
    <property type="evidence" value="ECO:0000250"/>
    <property type="project" value="UniProtKB"/>
</dbReference>
<dbReference type="GO" id="GO:0048471">
    <property type="term" value="C:perinuclear region of cytoplasm"/>
    <property type="evidence" value="ECO:0007669"/>
    <property type="project" value="UniProtKB-SubCell"/>
</dbReference>
<dbReference type="GO" id="GO:0000976">
    <property type="term" value="F:transcription cis-regulatory region binding"/>
    <property type="evidence" value="ECO:0000250"/>
    <property type="project" value="UniProtKB"/>
</dbReference>
<dbReference type="GO" id="GO:0003713">
    <property type="term" value="F:transcription coactivator activity"/>
    <property type="evidence" value="ECO:0000250"/>
    <property type="project" value="UniProtKB"/>
</dbReference>
<dbReference type="GO" id="GO:0001222">
    <property type="term" value="F:transcription corepressor binding"/>
    <property type="evidence" value="ECO:0007669"/>
    <property type="project" value="TreeGrafter"/>
</dbReference>
<dbReference type="GO" id="GO:0006338">
    <property type="term" value="P:chromatin remodeling"/>
    <property type="evidence" value="ECO:0000250"/>
    <property type="project" value="UniProtKB"/>
</dbReference>
<dbReference type="GO" id="GO:0032922">
    <property type="term" value="P:circadian regulation of gene expression"/>
    <property type="evidence" value="ECO:0000250"/>
    <property type="project" value="UniProtKB"/>
</dbReference>
<dbReference type="GO" id="GO:0043153">
    <property type="term" value="P:entrainment of circadian clock by photoperiod"/>
    <property type="evidence" value="ECO:0007669"/>
    <property type="project" value="TreeGrafter"/>
</dbReference>
<dbReference type="GO" id="GO:0006631">
    <property type="term" value="P:fatty acid metabolic process"/>
    <property type="evidence" value="ECO:0000250"/>
    <property type="project" value="UniProtKB"/>
</dbReference>
<dbReference type="GO" id="GO:0006094">
    <property type="term" value="P:gluconeogenesis"/>
    <property type="evidence" value="ECO:0000250"/>
    <property type="project" value="UniProtKB"/>
</dbReference>
<dbReference type="GO" id="GO:0005978">
    <property type="term" value="P:glycogen biosynthetic process"/>
    <property type="evidence" value="ECO:0000250"/>
    <property type="project" value="UniProtKB"/>
</dbReference>
<dbReference type="GO" id="GO:0019249">
    <property type="term" value="P:lactate biosynthetic process"/>
    <property type="evidence" value="ECO:0000250"/>
    <property type="project" value="UniProtKB"/>
</dbReference>
<dbReference type="GO" id="GO:0042754">
    <property type="term" value="P:negative regulation of circadian rhythm"/>
    <property type="evidence" value="ECO:0000250"/>
    <property type="project" value="UniProtKB"/>
</dbReference>
<dbReference type="GO" id="GO:0045892">
    <property type="term" value="P:negative regulation of DNA-templated transcription"/>
    <property type="evidence" value="ECO:0000250"/>
    <property type="project" value="UniProtKB"/>
</dbReference>
<dbReference type="GO" id="GO:0070345">
    <property type="term" value="P:negative regulation of fat cell proliferation"/>
    <property type="evidence" value="ECO:0000250"/>
    <property type="project" value="UniProtKB"/>
</dbReference>
<dbReference type="GO" id="GO:0031397">
    <property type="term" value="P:negative regulation of protein ubiquitination"/>
    <property type="evidence" value="ECO:0000250"/>
    <property type="project" value="UniProtKB"/>
</dbReference>
<dbReference type="GO" id="GO:0000122">
    <property type="term" value="P:negative regulation of transcription by RNA polymerase II"/>
    <property type="evidence" value="ECO:0000250"/>
    <property type="project" value="UniProtKB"/>
</dbReference>
<dbReference type="GO" id="GO:0051726">
    <property type="term" value="P:regulation of cell cycle"/>
    <property type="evidence" value="ECO:0000250"/>
    <property type="project" value="UniProtKB"/>
</dbReference>
<dbReference type="GO" id="GO:0042752">
    <property type="term" value="P:regulation of circadian rhythm"/>
    <property type="evidence" value="ECO:0000250"/>
    <property type="project" value="UniProtKB"/>
</dbReference>
<dbReference type="GO" id="GO:0051946">
    <property type="term" value="P:regulation of glutamate uptake involved in transmission of nerve impulse"/>
    <property type="evidence" value="ECO:0000250"/>
    <property type="project" value="UniProtKB"/>
</dbReference>
<dbReference type="GO" id="GO:0050796">
    <property type="term" value="P:regulation of insulin secretion"/>
    <property type="evidence" value="ECO:0000250"/>
    <property type="project" value="UniProtKB"/>
</dbReference>
<dbReference type="GO" id="GO:0050767">
    <property type="term" value="P:regulation of neurogenesis"/>
    <property type="evidence" value="ECO:0000250"/>
    <property type="project" value="UniProtKB"/>
</dbReference>
<dbReference type="GO" id="GO:0019229">
    <property type="term" value="P:regulation of vasoconstriction"/>
    <property type="evidence" value="ECO:0000250"/>
    <property type="project" value="UniProtKB"/>
</dbReference>
<dbReference type="GO" id="GO:0002931">
    <property type="term" value="P:response to ischemia"/>
    <property type="evidence" value="ECO:0000250"/>
    <property type="project" value="UniProtKB"/>
</dbReference>
<dbReference type="GO" id="GO:0050872">
    <property type="term" value="P:white fat cell differentiation"/>
    <property type="evidence" value="ECO:0000250"/>
    <property type="project" value="UniProtKB"/>
</dbReference>
<dbReference type="CDD" id="cd00130">
    <property type="entry name" value="PAS"/>
    <property type="match status" value="1"/>
</dbReference>
<dbReference type="FunFam" id="3.30.450.20:FF:000013">
    <property type="entry name" value="Period circadian protein homolog 2"/>
    <property type="match status" value="1"/>
</dbReference>
<dbReference type="FunFam" id="3.30.450.20:FF:000004">
    <property type="entry name" value="Period circadian protein homolog 3"/>
    <property type="match status" value="1"/>
</dbReference>
<dbReference type="Gene3D" id="3.30.450.20">
    <property type="entry name" value="PAS domain"/>
    <property type="match status" value="2"/>
</dbReference>
<dbReference type="InterPro" id="IPR000014">
    <property type="entry name" value="PAS"/>
</dbReference>
<dbReference type="InterPro" id="IPR035965">
    <property type="entry name" value="PAS-like_dom_sf"/>
</dbReference>
<dbReference type="InterPro" id="IPR013655">
    <property type="entry name" value="PAS_fold_3"/>
</dbReference>
<dbReference type="InterPro" id="IPR048814">
    <property type="entry name" value="Per1-3_PAS-A"/>
</dbReference>
<dbReference type="InterPro" id="IPR022728">
    <property type="entry name" value="Period_circadian-like_C"/>
</dbReference>
<dbReference type="InterPro" id="IPR050760">
    <property type="entry name" value="Period_circadian_regulator"/>
</dbReference>
<dbReference type="PANTHER" id="PTHR11269">
    <property type="entry name" value="PERIOD CIRCADIAN PROTEIN"/>
    <property type="match status" value="1"/>
</dbReference>
<dbReference type="PANTHER" id="PTHR11269:SF9">
    <property type="entry name" value="PERIOD CIRCADIAN PROTEIN HOMOLOG 2"/>
    <property type="match status" value="1"/>
</dbReference>
<dbReference type="Pfam" id="PF23170">
    <property type="entry name" value="bHLH_PER"/>
    <property type="match status" value="1"/>
</dbReference>
<dbReference type="Pfam" id="PF08447">
    <property type="entry name" value="PAS_3"/>
    <property type="match status" value="1"/>
</dbReference>
<dbReference type="Pfam" id="PF21353">
    <property type="entry name" value="Per3-like_PAS-A"/>
    <property type="match status" value="1"/>
</dbReference>
<dbReference type="Pfam" id="PF12114">
    <property type="entry name" value="Period_C"/>
    <property type="match status" value="1"/>
</dbReference>
<dbReference type="SUPFAM" id="SSF55785">
    <property type="entry name" value="PYP-like sensor domain (PAS domain)"/>
    <property type="match status" value="1"/>
</dbReference>
<dbReference type="PROSITE" id="PS50112">
    <property type="entry name" value="PAS"/>
    <property type="match status" value="1"/>
</dbReference>
<comment type="function">
    <text evidence="2">Transcriptional repressor which forms a core component of the circadian clock. The circadian clock, an internal time-keeping system, regulates various physiological processes through the generation of approximately 24 hour circadian rhythms in gene expression, which are translated into rhythms in metabolism and behavior. It is derived from the Latin roots 'circa' (about) and 'diem' (day) and acts as an important regulator of a wide array of physiological functions including metabolism, sleep, body temperature, blood pressure, endocrine, immune, cardiovascular, and renal function. Consists of two major components: the central clock, residing in the suprachiasmatic nucleus (SCN) of the brain, and the peripheral clocks that are present in nearly every tissue and organ system. Both the central and peripheral clocks can be reset by environmental cues, also known as Zeitgebers (German for 'timegivers'). The predominant Zeitgeber for the central clock is light, which is sensed by retina and signals directly to the SCN. The central clock entrains the peripheral clocks through neuronal and hormonal signals, body temperature and feeding-related cues, aligning all clocks with the external light/dark cycle. Circadian rhythms allow an organism to achieve temporal homeostasis with its environment at the molecular level by regulating gene expression to create a peak of protein expression once every 24 hours to control when a particular physiological process is most active with respect to the solar day. Transcription and translation of core clock components (CLOCK, NPAS2, BMAL1, BMAL2, PER1, PER2, PER3, CRY1 and CRY2) plays a critical role in rhythm generation, whereas delays imposed by post-translational modifications (PTMs) are important for determining the period (tau) of the rhythms (tau refers to the period of a rhythm and is the length, in time, of one complete cycle). A diurnal rhythm is synchronized with the day/night cycle, while the ultradian and infradian rhythms have a period shorter and longer than 24 hours, respectively. Disruptions in the circadian rhythms contribute to the pathology of cardiovascular diseases, cancer, metabolic syndrome and aging. A transcription/translation feedback loop (TTFL) forms the core of the molecular circadian clock mechanism. Transcription factors, CLOCK or NPAS2 and BMAL1 or BMAL2, form the positive limb of the feedback loop, act in the form of a heterodimer and activate the transcription of core clock genes and clock-controlled genes (involved in key metabolic processes), harboring E-box elements (5'-CACGTG-3') within their promoters. The core clock genes: PER1/2/3 and CRY1/2 which are transcriptional repressors form the negative limb of the feedback loop and interact with the CLOCK|NPAS2-BMAL1|BMAL2 heterodimer inhibiting its activity and thereby negatively regulating their own expression. This heterodimer also activates nuclear receptors NR1D1/2 and RORA/B/G, which form a second feedback loop and which activate and repress BMAL1 transcription, respectively. PER1 and PER2 proteins transport CRY1 and CRY2 into the nucleus with appropriate circadian timing, but also contribute directly to repression of clock-controlled target genes through interaction with several classes of RNA-binding proteins, helicases and others transcriptional repressors. PER appears to regulate circadian control of transcription by at least three different modes. First, interacts directly with the CLOCK-BMAL1 at the tail end of the nascent transcript peak to recruit complexes containing the SIN3-HDAC that remodel chromatin to repress transcription. Second, brings H3K9 methyltransferases such as SUV39H1 and SUV39H2 to the E-box elements of the circadian target genes, like PER2 itself or PER1. The recruitment of each repressive modifier to the DNA seems to be very precisely temporally orchestrated by the large PER complex, the deacetylases acting before than the methyltransferases. Additionally, large PER complexes are also recruited to the target genes 3' termination site through interactions with RNA-binding proteins and helicases that may play a role in transcription termination to regulate transcription independently of CLOCK-BMAL1 interactions. Recruitment of large PER complexes to the elongating polymerase at PER and CRY termination sites inhibited SETX action, impeding RNA polymerase II release and thereby repressing transcriptional reinitiation. May propagate clock information to metabolic pathways via the interaction with nuclear receptors. Coactivator of PPARA and corepressor of NR1D1, binds rhythmically at the promoter of nuclear receptors target genes like BMAL1 or G6PC1. Directly and specifically represses PPARG proadipogenic activity by blocking PPARG recruitment to target promoters and thereby transcriptional activation. Required for fatty acid and lipid metabolism, is involved as well in the regulation of circulating insulin levels. Plays an important role in the maintenance of cardiovascular functions through the regulation of NO and vasodilatatory prostaglandins production in aortas. Controls circadian glutamate uptake in synaptic vesicles through the regulation of VGLUT1 expression. May also be involved in the regulation of inflammatory processes. Represses the CLOCK-BMAL1 induced transcription of BHLHE40/DEC1 and ATF4. Negatively regulates the formation of the TIMELESS-CRY1 complex by competing with TIMELESS for binding to CRY1.</text>
</comment>
<comment type="subunit">
    <text evidence="1 2">Homodimer. Component of the circadian core oscillator, which includes the CRY proteins, CLOCK or NPAS2, BMAL1 or BMAL2, CSNK1D and/or CSNK1E, TIMELESS, and the PER proteins. Interacts with CLOCK-BMAL1 (off DNA). Interacts with BMAL2. Interacts directly with PER1 and PER3, and through a C-terminal domain, with CRY1 and CRY2. Interacts (via PAS 2 domain) with TIMELESS. Interacts with NFIL3. Different large complexes have been identified with different repressive functions. The core of PER complexes is composed of at least PER1, PER2, PER3, CRY1, CRY2, CSNK1D and/or CSNK1E. The large PER complex involved in the repression of transcriptional termination is composed of at least PER2, CDK9, DDX5, DHX9, NCBP1 and POLR2A (active). The large PER complex involved in the histone deacetylation is composed of at least HDAC1, PER2, SFPQ and SIN3A. The large PER complex involved in the histone methylation is composed of at least PER2, CBX3, TRIM28, SUV39H1 and/or SUV39H2; CBX3 mediates the formation of the complex. Interacts with SETX; the interaction inhibits termination of circadian target genes. Interacts with the nuclear receptors HNF4A, NR1D1, NR4A2, RORA, PPARA, PPARG and THRA; the interaction with at least PPARG is ligand dependent. Interacts with PML. Interacts (phosphorylated) with BTRC and FBXW11; the interactions trigger proteasomal degradation. Interacts with NONO and SFPQ. Interacts with PRKCDBP. Interacts with MAGEL2. Interacts with MAP1LC3B (By similarity). Interacts with HNF4A (By similarity).</text>
</comment>
<comment type="subcellular location">
    <subcellularLocation>
        <location evidence="2">Nucleus</location>
    </subcellularLocation>
    <subcellularLocation>
        <location evidence="2">Cytoplasm</location>
    </subcellularLocation>
    <subcellularLocation>
        <location evidence="2">Cytoplasm</location>
        <location evidence="2">Perinuclear region</location>
    </subcellularLocation>
    <text evidence="2">Nucleocytoplasmic shuttling is effected by interaction with other circadian core oscillator proteins and/or by phosphorylation. Translocate to the nucleus after phosphorylation by CSNK1D or CSNK1E. Also translocated to the nucleus by CRY1 or CRY2. PML regulates its nuclear localization (By similarity).</text>
</comment>
<comment type="tissue specificity">
    <text evidence="6">Expressed in the brain, mainly in the suprachiasmatic nucleus (SCN). Expression also found in the harderian gland, lung, eye, intestine, liver and skeletal muscle.</text>
</comment>
<comment type="induction">
    <text evidence="6">Exhibits circadian rhythm expression. In the SCN and harderian gland, maximum levels at ZT12. Maximum levels in the eye and liver at ZT18. Under constant darkness, maximum levels, in SCN and harderian gland, during subjective day at CT12. In the eye, maximum levels at CT18.</text>
</comment>
<comment type="PTM">
    <text evidence="2">Acetylated. Deacetylated by SIRT1, resulting in decreased protein stability. Deacetylated by SIRT6, preventing its degradation by the proteasome, resulting in increased protein stability.</text>
</comment>
<comment type="PTM">
    <text evidence="2">Phosphorylated by CSNK1E and CSNK1D. Phosphorylation results in PER2 protein degradation. May be dephosphorylated by PP1 (By similarity).</text>
</comment>
<comment type="PTM">
    <text evidence="2">Ubiquitinated, leading to its proteasomal degradation. Ubiquitination may be inhibited by CRY1.</text>
</comment>
<keyword id="KW-0007">Acetylation</keyword>
<keyword id="KW-0090">Biological rhythms</keyword>
<keyword id="KW-0963">Cytoplasm</keyword>
<keyword id="KW-0539">Nucleus</keyword>
<keyword id="KW-0597">Phosphoprotein</keyword>
<keyword id="KW-0677">Repeat</keyword>
<keyword id="KW-0804">Transcription</keyword>
<keyword id="KW-0805">Transcription regulation</keyword>
<keyword id="KW-0832">Ubl conjugation</keyword>
<proteinExistence type="evidence at transcript level"/>
<feature type="chain" id="PRO_0000261153" description="Period circadian protein homolog 2">
    <location>
        <begin position="1"/>
        <end position="1248"/>
    </location>
</feature>
<feature type="domain" description="PAS 1" evidence="4">
    <location>
        <begin position="175"/>
        <end position="242"/>
    </location>
</feature>
<feature type="domain" description="PAS 2" evidence="4">
    <location>
        <begin position="315"/>
        <end position="381"/>
    </location>
</feature>
<feature type="domain" description="PAC">
    <location>
        <begin position="389"/>
        <end position="432"/>
    </location>
</feature>
<feature type="region of interest" description="Disordered" evidence="5">
    <location>
        <begin position="1"/>
        <end position="57"/>
    </location>
</feature>
<feature type="region of interest" description="Disordered" evidence="5">
    <location>
        <begin position="467"/>
        <end position="563"/>
    </location>
</feature>
<feature type="region of interest" description="Important for protein stability" evidence="3">
    <location>
        <begin position="474"/>
        <end position="478"/>
    </location>
</feature>
<feature type="region of interest" description="CSNK1E binding domain" evidence="2">
    <location>
        <begin position="506"/>
        <end position="706"/>
    </location>
</feature>
<feature type="region of interest" description="Disordered" evidence="5">
    <location>
        <begin position="619"/>
        <end position="638"/>
    </location>
</feature>
<feature type="region of interest" description="Disordered" evidence="5">
    <location>
        <begin position="675"/>
        <end position="708"/>
    </location>
</feature>
<feature type="region of interest" description="Disordered" evidence="5">
    <location>
        <begin position="751"/>
        <end position="829"/>
    </location>
</feature>
<feature type="region of interest" description="Interaction with PPARG" evidence="2">
    <location>
        <begin position="873"/>
        <end position="1058"/>
    </location>
</feature>
<feature type="region of interest" description="Disordered" evidence="5">
    <location>
        <begin position="950"/>
        <end position="971"/>
    </location>
</feature>
<feature type="region of interest" description="Disordered" evidence="5">
    <location>
        <begin position="984"/>
        <end position="1035"/>
    </location>
</feature>
<feature type="region of interest" description="Disordered" evidence="5">
    <location>
        <begin position="1057"/>
        <end position="1113"/>
    </location>
</feature>
<feature type="region of interest" description="CRY binding domain" evidence="3">
    <location>
        <begin position="1148"/>
        <end position="1248"/>
    </location>
</feature>
<feature type="region of interest" description="Disordered" evidence="5">
    <location>
        <begin position="1215"/>
        <end position="1248"/>
    </location>
</feature>
<feature type="short sequence motif" description="Nuclear export signal 1" evidence="2">
    <location>
        <begin position="105"/>
        <end position="114"/>
    </location>
</feature>
<feature type="short sequence motif" description="LXXLL">
    <location>
        <begin position="302"/>
        <end position="306"/>
    </location>
</feature>
<feature type="short sequence motif" description="Nuclear export signal 2" evidence="2">
    <location>
        <begin position="456"/>
        <end position="465"/>
    </location>
</feature>
<feature type="short sequence motif" description="Nuclear localization signal" evidence="2">
    <location>
        <begin position="773"/>
        <end position="789"/>
    </location>
</feature>
<feature type="short sequence motif" description="Nuclear export signal 3" evidence="2">
    <location>
        <begin position="974"/>
        <end position="981"/>
    </location>
</feature>
<feature type="short sequence motif" description="LXXLL">
    <location>
        <begin position="1042"/>
        <end position="1046"/>
    </location>
</feature>
<feature type="compositionally biased region" description="Polar residues" evidence="5">
    <location>
        <begin position="9"/>
        <end position="24"/>
    </location>
</feature>
<feature type="compositionally biased region" description="Polar residues" evidence="5">
    <location>
        <begin position="32"/>
        <end position="50"/>
    </location>
</feature>
<feature type="compositionally biased region" description="Polar residues" evidence="5">
    <location>
        <begin position="510"/>
        <end position="521"/>
    </location>
</feature>
<feature type="compositionally biased region" description="Basic and acidic residues" evidence="5">
    <location>
        <begin position="523"/>
        <end position="534"/>
    </location>
</feature>
<feature type="compositionally biased region" description="Basic residues" evidence="5">
    <location>
        <begin position="774"/>
        <end position="787"/>
    </location>
</feature>
<feature type="compositionally biased region" description="Low complexity" evidence="5">
    <location>
        <begin position="816"/>
        <end position="827"/>
    </location>
</feature>
<feature type="compositionally biased region" description="Low complexity" evidence="5">
    <location>
        <begin position="987"/>
        <end position="1004"/>
    </location>
</feature>
<feature type="compositionally biased region" description="Low complexity" evidence="5">
    <location>
        <begin position="1057"/>
        <end position="1080"/>
    </location>
</feature>
<feature type="compositionally biased region" description="Polar residues" evidence="5">
    <location>
        <begin position="1083"/>
        <end position="1102"/>
    </location>
</feature>
<feature type="compositionally biased region" description="Basic and acidic residues" evidence="5">
    <location>
        <begin position="1103"/>
        <end position="1112"/>
    </location>
</feature>
<feature type="modified residue" description="Phosphoserine" evidence="2">
    <location>
        <position position="521"/>
    </location>
</feature>
<feature type="modified residue" description="Phosphoserine" evidence="2">
    <location>
        <position position="524"/>
    </location>
</feature>
<feature type="modified residue" description="Phosphoserine" evidence="2">
    <location>
        <position position="527"/>
    </location>
</feature>
<feature type="modified residue" description="Phosphoserine" evidence="2">
    <location>
        <position position="540"/>
    </location>
</feature>
<feature type="modified residue" description="Phosphoserine" evidence="1">
    <location>
        <position position="656"/>
    </location>
</feature>
<feature type="modified residue" description="Phosphoserine" evidence="2">
    <location>
        <position position="690"/>
    </location>
</feature>
<feature type="modified residue" description="Phosphoserine" evidence="2">
    <location>
        <position position="694"/>
    </location>
</feature>
<feature type="modified residue" description="Phosphoserine" evidence="2">
    <location>
        <position position="703"/>
    </location>
</feature>
<feature type="modified residue" description="Phosphoserine" evidence="2">
    <location>
        <position position="755"/>
    </location>
</feature>
<feature type="modified residue" description="Phosphoserine" evidence="2">
    <location>
        <position position="930"/>
    </location>
</feature>
<feature type="modified residue" description="Phosphothreonine" evidence="2">
    <location>
        <position position="955"/>
    </location>
</feature>
<feature type="modified residue" description="Phosphoserine" evidence="2">
    <location>
        <position position="962"/>
    </location>
</feature>
<feature type="modified residue" description="Phosphoserine" evidence="2">
    <location>
        <position position="1117"/>
    </location>
</feature>